<organism>
    <name type="scientific">Mycoplasma pneumoniae (strain ATCC 29342 / M129 / Subtype 1)</name>
    <name type="common">Mycoplasmoides pneumoniae</name>
    <dbReference type="NCBI Taxonomy" id="272634"/>
    <lineage>
        <taxon>Bacteria</taxon>
        <taxon>Bacillati</taxon>
        <taxon>Mycoplasmatota</taxon>
        <taxon>Mycoplasmoidales</taxon>
        <taxon>Mycoplasmoidaceae</taxon>
        <taxon>Mycoplasmoides</taxon>
    </lineage>
</organism>
<proteinExistence type="inferred from homology"/>
<gene>
    <name type="primary">clpB</name>
    <name type="ordered locus">MPN_531</name>
    <name type="ORF">MP311</name>
</gene>
<accession>P75247</accession>
<sequence>MDFSFTPTPDKRDFLKEMGRSINDEVLKNKVDPIIGRDNEIRRLIEILSRKNKNNPVLIGEPGVGKTAIVEGFVRRVVNNDVPLNLRDVEIYELSLSGLIAGTQYQGEFEKRVNGILKQVKESNGKIILFIDEIHQIVGLGRNSSSGAMDIANILKPMLARGEIKVIGATTLKEYREYVEKDGALERRFQKILVSEPSQQEALTIMRGLKTRWELFHNLTIFDSALVAAVEMSARYIPDRNLPDKAIDLIDEASAKIKTEMASEPVVIDTLKREIINLETEYAALKQDKENADNKKKQGHLDNLKQQLDELKKKRDSLTAEWKKEKTNFESINKLKKEIEDLQTRLELYQTEGNYEAASKILYYDIPKLKNQLEQAQKKYVDSKHDLFKTEVSENEVAEVVSQATGIPLKKLLETEKEKLLHLGDEIKKRVKGQDAAVETVVNTVMRGRVNLNDPNRPIGSFIFLGSTGVGKTELAKSLAEVLFDNEKAMIRFDMSEYMEKHSVAKLIGAPPGYVGYEQSGLLTEAVRRKPYCVLLFDEIEKAHPDVTNILLQVLDDGTLKDSQGRLVNFKNTMIIMTSNLGSNYIMENKRDLAMEALKKHFRAEFINRIDEIVFFSVLQKTTVLEIITNLLDQLNQRLAKQNLKFTFDPKLNEFIYKSSFDEQFGARPIKRFIDRQIATLIAKQILEGIITKDVSYNVIVEKDKVAIVANKVKS</sequence>
<feature type="chain" id="PRO_0000191145" description="Chaperone protein ClpB">
    <location>
        <begin position="1"/>
        <end position="715"/>
    </location>
</feature>
<feature type="region of interest" description="NBD1" evidence="1">
    <location>
        <begin position="14"/>
        <end position="196"/>
    </location>
</feature>
<feature type="region of interest" description="Linker" evidence="1">
    <location>
        <begin position="197"/>
        <end position="406"/>
    </location>
</feature>
<feature type="region of interest" description="NBD2" evidence="1">
    <location>
        <begin position="416"/>
        <end position="618"/>
    </location>
</feature>
<feature type="region of interest" description="C-terminal" evidence="1">
    <location>
        <begin position="619"/>
        <end position="715"/>
    </location>
</feature>
<feature type="coiled-coil region" evidence="1">
    <location>
        <begin position="247"/>
        <end position="385"/>
    </location>
</feature>
<feature type="binding site" evidence="1">
    <location>
        <begin position="60"/>
        <end position="67"/>
    </location>
    <ligand>
        <name>ATP</name>
        <dbReference type="ChEBI" id="CHEBI:30616"/>
        <label>1</label>
    </ligand>
</feature>
<feature type="binding site" evidence="1">
    <location>
        <begin position="466"/>
        <end position="473"/>
    </location>
    <ligand>
        <name>ATP</name>
        <dbReference type="ChEBI" id="CHEBI:30616"/>
        <label>2</label>
    </ligand>
</feature>
<keyword id="KW-0067">ATP-binding</keyword>
<keyword id="KW-0143">Chaperone</keyword>
<keyword id="KW-0175">Coiled coil</keyword>
<keyword id="KW-0963">Cytoplasm</keyword>
<keyword id="KW-0547">Nucleotide-binding</keyword>
<keyword id="KW-1185">Reference proteome</keyword>
<keyword id="KW-0677">Repeat</keyword>
<keyword id="KW-0346">Stress response</keyword>
<evidence type="ECO:0000250" key="1"/>
<evidence type="ECO:0000305" key="2"/>
<name>CLPB_MYCPN</name>
<reference key="1">
    <citation type="journal article" date="1996" name="Nucleic Acids Res.">
        <title>Complete sequence analysis of the genome of the bacterium Mycoplasma pneumoniae.</title>
        <authorList>
            <person name="Himmelreich R."/>
            <person name="Hilbert H."/>
            <person name="Plagens H."/>
            <person name="Pirkl E."/>
            <person name="Li B.-C."/>
            <person name="Herrmann R."/>
        </authorList>
    </citation>
    <scope>NUCLEOTIDE SEQUENCE [LARGE SCALE GENOMIC DNA]</scope>
    <source>
        <strain>ATCC 29342 / M129 / Subtype 1</strain>
    </source>
</reference>
<comment type="function">
    <text evidence="1">Part of a stress-induced multi-chaperone system, it is involved in the recovery of the cell from heat-induced damage, in cooperation with DnaK, DnaJ and GrpE. Acts before DnaK, in the processing of protein aggregates. Protein binding stimulates the ATPase activity; ATP hydrolysis unfolds the denatured protein aggregates, which probably helps expose new hydrophobic binding sites on the surface of ClpB-bound aggregates, contributing to the solubilization and refolding of denatured protein aggregates by DnaK (By similarity).</text>
</comment>
<comment type="subunit">
    <text evidence="1">Homohexamer. The oligomerization is ATP-dependent (By similarity).</text>
</comment>
<comment type="subcellular location">
    <subcellularLocation>
        <location evidence="2">Cytoplasm</location>
    </subcellularLocation>
</comment>
<comment type="domain">
    <text evidence="1">The N-terminal domain probably functions as a substrate-discriminating domain, recruiting aggregated proteins to the ClpB hexamer and/or stabilizing bound proteins. The NBD2 domain is responsible for oligomerization, whereas the NBD1 domain stabilizes the hexamer probably in an ATP-dependent manner. The movement of the coiled-coil domain is essential for ClpB ability to rescue proteins from an aggregated state, probably by pulling apart large aggregated proteins, which are bound between the coiled-coils motifs of adjacent ClpB subunits in the functional hexamer (By similarity).</text>
</comment>
<comment type="similarity">
    <text evidence="2">Belongs to the ClpA/ClpB family.</text>
</comment>
<dbReference type="EMBL" id="U00089">
    <property type="protein sequence ID" value="AAB95959.1"/>
    <property type="molecule type" value="Genomic_DNA"/>
</dbReference>
<dbReference type="PIR" id="S73637">
    <property type="entry name" value="S73637"/>
</dbReference>
<dbReference type="RefSeq" id="NP_110220.1">
    <property type="nucleotide sequence ID" value="NC_000912.1"/>
</dbReference>
<dbReference type="RefSeq" id="WP_010874888.1">
    <property type="nucleotide sequence ID" value="NZ_OU342337.1"/>
</dbReference>
<dbReference type="SMR" id="P75247"/>
<dbReference type="IntAct" id="P75247">
    <property type="interactions" value="1"/>
</dbReference>
<dbReference type="STRING" id="272634.MPN_531"/>
<dbReference type="EnsemblBacteria" id="AAB95959">
    <property type="protein sequence ID" value="AAB95959"/>
    <property type="gene ID" value="MPN_531"/>
</dbReference>
<dbReference type="KEGG" id="mpn:MPN_531"/>
<dbReference type="PATRIC" id="fig|272634.6.peg.592"/>
<dbReference type="HOGENOM" id="CLU_005070_4_0_14"/>
<dbReference type="OrthoDB" id="9803641at2"/>
<dbReference type="BioCyc" id="MPNE272634:G1GJ3-876-MONOMER"/>
<dbReference type="Proteomes" id="UP000000808">
    <property type="component" value="Chromosome"/>
</dbReference>
<dbReference type="GO" id="GO:0005737">
    <property type="term" value="C:cytoplasm"/>
    <property type="evidence" value="ECO:0007669"/>
    <property type="project" value="UniProtKB-SubCell"/>
</dbReference>
<dbReference type="GO" id="GO:0005524">
    <property type="term" value="F:ATP binding"/>
    <property type="evidence" value="ECO:0007669"/>
    <property type="project" value="UniProtKB-KW"/>
</dbReference>
<dbReference type="GO" id="GO:0016887">
    <property type="term" value="F:ATP hydrolysis activity"/>
    <property type="evidence" value="ECO:0007669"/>
    <property type="project" value="InterPro"/>
</dbReference>
<dbReference type="GO" id="GO:0034605">
    <property type="term" value="P:cellular response to heat"/>
    <property type="evidence" value="ECO:0007669"/>
    <property type="project" value="TreeGrafter"/>
</dbReference>
<dbReference type="CDD" id="cd00009">
    <property type="entry name" value="AAA"/>
    <property type="match status" value="1"/>
</dbReference>
<dbReference type="CDD" id="cd19499">
    <property type="entry name" value="RecA-like_ClpB_Hsp104-like"/>
    <property type="match status" value="1"/>
</dbReference>
<dbReference type="FunFam" id="3.40.50.300:FF:000120">
    <property type="entry name" value="ATP-dependent chaperone ClpB"/>
    <property type="match status" value="1"/>
</dbReference>
<dbReference type="FunFam" id="3.40.50.300:FF:000025">
    <property type="entry name" value="ATP-dependent Clp protease subunit"/>
    <property type="match status" value="1"/>
</dbReference>
<dbReference type="Gene3D" id="1.10.8.60">
    <property type="match status" value="1"/>
</dbReference>
<dbReference type="Gene3D" id="3.40.50.300">
    <property type="entry name" value="P-loop containing nucleotide triphosphate hydrolases"/>
    <property type="match status" value="3"/>
</dbReference>
<dbReference type="InterPro" id="IPR003593">
    <property type="entry name" value="AAA+_ATPase"/>
</dbReference>
<dbReference type="InterPro" id="IPR003959">
    <property type="entry name" value="ATPase_AAA_core"/>
</dbReference>
<dbReference type="InterPro" id="IPR019489">
    <property type="entry name" value="Clp_ATPase_C"/>
</dbReference>
<dbReference type="InterPro" id="IPR001270">
    <property type="entry name" value="ClpA/B"/>
</dbReference>
<dbReference type="InterPro" id="IPR018368">
    <property type="entry name" value="ClpA/B_CS1"/>
</dbReference>
<dbReference type="InterPro" id="IPR028299">
    <property type="entry name" value="ClpA/B_CS2"/>
</dbReference>
<dbReference type="InterPro" id="IPR041546">
    <property type="entry name" value="ClpA/ClpB_AAA_lid"/>
</dbReference>
<dbReference type="InterPro" id="IPR050130">
    <property type="entry name" value="ClpA_ClpB"/>
</dbReference>
<dbReference type="InterPro" id="IPR027417">
    <property type="entry name" value="P-loop_NTPase"/>
</dbReference>
<dbReference type="PANTHER" id="PTHR11638">
    <property type="entry name" value="ATP-DEPENDENT CLP PROTEASE"/>
    <property type="match status" value="1"/>
</dbReference>
<dbReference type="PANTHER" id="PTHR11638:SF18">
    <property type="entry name" value="HEAT SHOCK PROTEIN 104"/>
    <property type="match status" value="1"/>
</dbReference>
<dbReference type="Pfam" id="PF00004">
    <property type="entry name" value="AAA"/>
    <property type="match status" value="1"/>
</dbReference>
<dbReference type="Pfam" id="PF07724">
    <property type="entry name" value="AAA_2"/>
    <property type="match status" value="1"/>
</dbReference>
<dbReference type="Pfam" id="PF17871">
    <property type="entry name" value="AAA_lid_9"/>
    <property type="match status" value="1"/>
</dbReference>
<dbReference type="Pfam" id="PF10431">
    <property type="entry name" value="ClpB_D2-small"/>
    <property type="match status" value="1"/>
</dbReference>
<dbReference type="PRINTS" id="PR00300">
    <property type="entry name" value="CLPPROTEASEA"/>
</dbReference>
<dbReference type="SMART" id="SM00382">
    <property type="entry name" value="AAA"/>
    <property type="match status" value="2"/>
</dbReference>
<dbReference type="SMART" id="SM01086">
    <property type="entry name" value="ClpB_D2-small"/>
    <property type="match status" value="1"/>
</dbReference>
<dbReference type="SUPFAM" id="SSF52540">
    <property type="entry name" value="P-loop containing nucleoside triphosphate hydrolases"/>
    <property type="match status" value="2"/>
</dbReference>
<dbReference type="PROSITE" id="PS00870">
    <property type="entry name" value="CLPAB_1"/>
    <property type="match status" value="1"/>
</dbReference>
<dbReference type="PROSITE" id="PS00871">
    <property type="entry name" value="CLPAB_2"/>
    <property type="match status" value="1"/>
</dbReference>
<protein>
    <recommendedName>
        <fullName>Chaperone protein ClpB</fullName>
    </recommendedName>
</protein>